<proteinExistence type="evidence at protein level"/>
<comment type="function">
    <text evidence="3 4 5">Integrins alpha-1/beta-1, alpha-2/beta-1, alpha-10/beta-1 and alpha-11/beta-1 are receptors for collagen. Integrins alpha-1/beta-1 and alpha-2/beta-2 recognize the proline-hydroxylated sequence G-F-P-G-E-R in collagen. Integrins alpha-2/beta-1, alpha-3/beta-1, alpha-4/beta-1, alpha-5/beta-1, alpha-8/beta-1, alpha-10/beta-1, alpha-11/beta-1 and alpha-V/beta-1 are receptors for fibronectin. Alpha-4/beta-1 recognizes one or more domains within the alternatively spliced CS-1 and CS-5 regions of fibronectin. Integrin alpha-5/beta-1 is a receptor for fibrinogen. Integrin alpha-1/beta-1, alpha-2/beta-1, alpha-6/beta-1 and alpha-7/beta-1 are receptors for lamimin. Integrin alpha-6/beta-1 (ITGA6:ITGB1) is present in oocytes and is involved in sperm-egg fusion. Integrin alpha-4/beta-1 is a receptor for VCAM1 and recognizes the sequence Q-I-D-S in VCAM1. Integrin alpha-9/beta-1 is a receptor for VCAM1, cytotactin and osteopontin. It recognizes the sequence A-E-I-D-G-I-E-L in cytotactin. Integrin alpha-3/beta-1 is a receptor for epiligrin, thrombospondin and CSPG4. Integrin alpha-3/beta-1 provides a docking site for FAP (seprase) at invadopodia plasma membranes in a collagen-dependent manner and hence may participate in the adhesion, formation of invadopodia and matrix degradation processes, promoting cell invasion. Alpha-3/beta-1 may mediate with LGALS3 the stimulation by CSPG4 of endothelial cells migration. Integrin alpha-V/beta-1 is a receptor for vitronectin. Beta-1 integrins recognize the sequence R-G-D in a wide array of ligands. When associated with alpha-7/beta-1 integrin, regulates cell adhesion and laminin matrix deposition. Involved in promoting endothelial cell motility and angiogenesis. Involved in osteoblast compaction through the fibronectin fibrillogenesis cell-mediated matrix assembly process and the formation of mineralized bone nodules. May be involved in up-regulation of the activity of kinases such as PKC via binding to KRT1. Together with KRT1 and RACK1, serves as a platform for SRC activation or inactivation. Plays a mechanistic adhesive role during telophase, required for the successful completion of cytokinesis (By similarity). ITGA4:ITGB1 binds to fractalkine (CX3CL1) and may act as its coreceptor in CX3CR1-dependent fractalkine signaling. ITGA4:ITGB1 and ITGA5:ITGB1 bind to PLA2G2A via a site (site 2) which is distinct from the classical ligand-binding site (site 1) and this induces integrin conformational changes and enhanced ligand binding to site 1. ITGA5:ITGB1 acts as a receptor for fibrillin-1 (FBN1) and mediates R-G-D-dependent cell adhesion to FBN1. ITGA5:ITGB1 is a receptor for IL1B and binding is essential for IL1B signaling (By similarity). ITGA5:ITGB3 is a receptor for soluble CD40LG and is required for CD40/CD40LG signaling (By similarity). Plays an important role in myoblast differentiation and fusion during skeletal myogenesis (By similarity). ITGA9:ITGB1 may play a crucial role in SVEP1/polydom-mediated myoblast cell adhesion (By similarity). Integrins ITGA9:ITGB1 and ITGA4:ITGB1 repress PRKCA-mediated L-type voltage-gated channel Ca(2+) influx and ROCK-mediated calcium sensitivity in vascular smooth muscle cells via their interaction with SVEP1, thereby inhibit vasocontraction (By similarity).</text>
</comment>
<comment type="subunit">
    <text evidence="3 4 5">Interacts with seprase FAP (seprase); the interaction occurs at the cell surface of invadopodia membrane in a collagen-dependent manner (By similarity). Heterodimer of an alpha and a beta subunit. Beta-1 associates with either alpha-1, alpha-2, alpha-3, alpha-4, alpha-5, alpha-6, alpha-7, alpha-8, alpha-9, alpha-10, alpha-11 or alpha-V. ITGA6:ITGB1 is found in a complex with CD9; interaction takes place in oocytes and is involved in sperm-egg fusion. Binds LGALS3BP and NMRK2, when associated with alpha-7, but not with alpha-5. Interacts with FLNA, FLNB, FLNC and RANBP9. Interacts with KRT1 in the presence of RACK1 and SRC. Interacts with JAML; integrin alpha-4/beta-1 may regulate leukocyte to endothelial cells adhesion by controlling JAML homodimerization. Interacts with RAB21. Interacts (via the cytoplasmic region) with RAB25 (via the hypervariable C-terminal region). Interacts with MYO10. Interacts with ITGB1BP1 (via C-terminal region); the interaction is a prerequisite for focal adhesion disassembly. Interacts with TLN1; the interaction is prevented by competitive binding of ITGB1BP1. Interacts with ACAP1; required for ITGB1 recycling. Interacts with ASAP3. Interacts with FERMT2; the interaction is inhibited in presence of ITGB1BP1. Interacts with DAB2. Interacts with FGR and HCK. Interacts with alpha-7A and alpha-7B in adult skeletal muscle. Interacts with alpha-7B in cardiomyocytes of adult heart. Interacts with EMP2; the interaction may be direct or indirect and ITGB1 has a heterodimer form (By similarity). ITGA5:ITGB1 interacts with CCN3 (By similarity). ITGA4:ITGB1 is found in a ternary complex with CX3CR1 and CX3CL1 (By similarity). ITGA5:ITGB1 interacts with FBN1 (By similarity). ITGA5:ITGB1 acts as a receptor for fibronectin FN1 and mediates R-G-D-dependent cell adhesion to FN1 (By similarity). ITGA5:ITGB1 interacts with IL1B. Interacts with MDK. ITGA4:ITGB1 interacts with MDK; this interaction mediates MDK-induced osteoblast cells migration through PXN phosphorylation. ITGA6:ITGB1 interacts with MDK; this interaction mediates MDK-induced neurite-outgrowth (By similarity). ITGA5:ITGB1 interacts with ACE2 (By similarity). Interacts with TMEM182 and LAMB1 (By similarity). Interacts with tensin TNS3; TNS3 also interacts with PEAK1, thus acting as an adapter molecule to bridge the association of PEAK1 with ITGB1 (By similarity). Interacts with tensin TNS4; the interaction displaces tensin TNS3 from the ITGB1 cytoplasmic tail and promotes ITGB1 stability (By similarity). Integrin ITGA9:ITGB1 interacts with SPP1/OPN (via N-terminus) (By similarity). Integrin ITGA9:ITGB1 interacts with TNC/TNFN3 (via the 3rd Fibronectin type-III domain) (By similarity). Integrins ITGA4:ITGB1 and ITGA9:ITGB1 interact with SVEP1 (via Sushi domain 21); thereby inhibit Ca(2+) intracellular signaling and as a result repress vasocontraction (By similarity). ITGA4:ITGB1 and ITGA5:ITGB1 interacts with SELP (By similarity). ITGA5:ITGB1 interacts with IGFBP1 (By similarity). ITGA4:ITGB1 interacts with BCAM (By similarity). Interacts with ADGRG6 (By similarity).</text>
</comment>
<comment type="subcellular location">
    <subcellularLocation>
        <location evidence="3">Cell membrane</location>
        <topology evidence="6">Single-pass type I membrane protein</topology>
    </subcellularLocation>
    <subcellularLocation>
        <location evidence="3">Cell projection</location>
        <location evidence="3">Invadopodium membrane</location>
        <topology evidence="6">Single-pass type I membrane protein</topology>
    </subcellularLocation>
    <subcellularLocation>
        <location evidence="3">Cell projection</location>
        <location evidence="3">Ruffle membrane</location>
        <topology evidence="6">Single-pass type I membrane protein</topology>
    </subcellularLocation>
    <subcellularLocation>
        <location evidence="3">Recycling endosome</location>
    </subcellularLocation>
    <subcellularLocation>
        <location evidence="3">Melanosome</location>
    </subcellularLocation>
    <subcellularLocation>
        <location evidence="3">Cell projection</location>
        <location evidence="3">Lamellipodium</location>
    </subcellularLocation>
    <subcellularLocation>
        <location evidence="3">Cell projection</location>
        <location evidence="3">Ruffle</location>
    </subcellularLocation>
    <subcellularLocation>
        <location evidence="3">Cell junction</location>
        <location evidence="3">Focal adhesion</location>
    </subcellularLocation>
    <text evidence="3">Enriched preferentially at invadopodia, cell membrane protrusions that correspond to sites of cell invasion, in a collagen-dependent manner. Localized at plasma and ruffle membranes in a collagen-independent manner. Colocalizes with ITGB1BP1 and metastatic suppressor protein NME2 at the edge or peripheral ruffles and lamellipodia during the early stages of cell spreading on fibronectin or collagen. Translocates from peripheral focal adhesions to fibrillar adhesions in an ITGB1BP1-dependent manner.</text>
</comment>
<comment type="domain">
    <text evidence="3">The VWFA domain (or beta I domain) contains three cation-binding sites: the ligand-associated metal ion-binding site (LIMBS or SyMBS), the metal ion-dependent adhesion site (MIDAS), and the adjacent MIDAS site (ADMIDAS). This domain is also part of the ligand-binding site.</text>
</comment>
<comment type="similarity">
    <text evidence="8">Belongs to the integrin beta chain family.</text>
</comment>
<comment type="sequence caution" evidence="8">
    <conflict type="frameshift">
        <sequence resource="EMBL-CDS" id="AAI31846"/>
    </conflict>
</comment>
<reference key="1">
    <citation type="journal article" date="1995" name="Gene">
        <title>Cloning and sequence of the cDNA encoding the rat oligodendrocyte integrin beta 1 subunit.</title>
        <authorList>
            <person name="Malek-Hedayat S."/>
            <person name="Rome L.H."/>
        </authorList>
    </citation>
    <scope>NUCLEOTIDE SEQUENCE [MRNA]</scope>
    <source>
        <tissue>Oligodendrocyte</tissue>
    </source>
</reference>
<reference key="2">
    <citation type="journal article" date="2004" name="Genome Res.">
        <title>The status, quality, and expansion of the NIH full-length cDNA project: the Mammalian Gene Collection (MGC).</title>
        <authorList>
            <consortium name="The MGC Project Team"/>
        </authorList>
    </citation>
    <scope>NUCLEOTIDE SEQUENCE [LARGE SCALE MRNA]</scope>
    <source>
        <tissue>Brain</tissue>
    </source>
</reference>
<feature type="signal peptide" evidence="1">
    <location>
        <begin position="1"/>
        <end position="20"/>
    </location>
</feature>
<feature type="chain" id="PRO_0000016336" description="Integrin beta-1">
    <location>
        <begin position="21"/>
        <end position="798"/>
    </location>
</feature>
<feature type="topological domain" description="Extracellular" evidence="6">
    <location>
        <begin position="21"/>
        <end position="729"/>
    </location>
</feature>
<feature type="transmembrane region" description="Helical" evidence="6">
    <location>
        <begin position="730"/>
        <end position="752"/>
    </location>
</feature>
<feature type="topological domain" description="Cytoplasmic" evidence="6">
    <location>
        <begin position="753"/>
        <end position="799"/>
    </location>
</feature>
<feature type="domain" description="PSI" evidence="6">
    <location>
        <begin position="26"/>
        <end position="76"/>
    </location>
</feature>
<feature type="domain" description="VWFA" evidence="2">
    <location>
        <begin position="140"/>
        <end position="378"/>
    </location>
</feature>
<feature type="domain" description="I-EGF 1" evidence="7">
    <location>
        <begin position="467"/>
        <end position="502"/>
    </location>
</feature>
<feature type="domain" description="I-EGF 2" evidence="7">
    <location>
        <begin position="503"/>
        <end position="555"/>
    </location>
</feature>
<feature type="domain" description="I-EGF 3" evidence="7">
    <location>
        <begin position="556"/>
        <end position="592"/>
    </location>
</feature>
<feature type="domain" description="I-EGF 4" evidence="7">
    <location>
        <begin position="593"/>
        <end position="632"/>
    </location>
</feature>
<feature type="region of interest" description="CX3CL1-binding" evidence="3">
    <location>
        <begin position="207"/>
        <end position="213"/>
    </location>
</feature>
<feature type="region of interest" description="CX3CL1-binding" evidence="3">
    <location>
        <begin position="295"/>
        <end position="314"/>
    </location>
</feature>
<feature type="region of interest" description="Interaction with TMEM182" evidence="4">
    <location>
        <begin position="383"/>
        <end position="466"/>
    </location>
</feature>
<feature type="region of interest" description="Signal for sorting from recycling endosomes; interaction with ACAP1" evidence="1">
    <location>
        <begin position="763"/>
        <end position="768"/>
    </location>
</feature>
<feature type="region of interest" description="Interaction with ITGB1BP1" evidence="1">
    <location>
        <begin position="786"/>
        <end position="793"/>
    </location>
</feature>
<feature type="binding site" description="in MIDAS binding site" evidence="3">
    <location>
        <position position="152"/>
    </location>
    <ligand>
        <name>Mg(2+)</name>
        <dbReference type="ChEBI" id="CHEBI:18420"/>
    </ligand>
</feature>
<feature type="binding site" description="in ADMIDAS binding site" evidence="3">
    <location>
        <position position="154"/>
    </location>
    <ligand>
        <name>Ca(2+)</name>
        <dbReference type="ChEBI" id="CHEBI:29108"/>
        <label>1</label>
    </ligand>
</feature>
<feature type="binding site" description="in MIDAS binding site" evidence="3">
    <location>
        <position position="154"/>
    </location>
    <ligand>
        <name>Mg(2+)</name>
        <dbReference type="ChEBI" id="CHEBI:18420"/>
    </ligand>
</feature>
<feature type="binding site" description="in ADMIDAS binding site" evidence="3">
    <location>
        <position position="157"/>
    </location>
    <ligand>
        <name>Ca(2+)</name>
        <dbReference type="ChEBI" id="CHEBI:29108"/>
        <label>1</label>
    </ligand>
</feature>
<feature type="binding site" description="in ADMIDAS binding site" evidence="3">
    <location>
        <position position="158"/>
    </location>
    <ligand>
        <name>Ca(2+)</name>
        <dbReference type="ChEBI" id="CHEBI:29108"/>
        <label>1</label>
    </ligand>
</feature>
<feature type="binding site" description="in LIMBS binding site" evidence="3">
    <location>
        <position position="189"/>
    </location>
    <ligand>
        <name>Ca(2+)</name>
        <dbReference type="ChEBI" id="CHEBI:29108"/>
        <label>2</label>
    </ligand>
</feature>
<feature type="binding site" description="in LIMBS binding site" evidence="3">
    <location>
        <position position="244"/>
    </location>
    <ligand>
        <name>Ca(2+)</name>
        <dbReference type="ChEBI" id="CHEBI:29108"/>
        <label>2</label>
    </ligand>
</feature>
<feature type="binding site" description="in LIMBS binding site" evidence="3">
    <location>
        <position position="246"/>
    </location>
    <ligand>
        <name>Ca(2+)</name>
        <dbReference type="ChEBI" id="CHEBI:29108"/>
        <label>2</label>
    </ligand>
</feature>
<feature type="binding site" description="in LIMBS binding site" evidence="3">
    <location>
        <position position="248"/>
    </location>
    <ligand>
        <name>Ca(2+)</name>
        <dbReference type="ChEBI" id="CHEBI:29108"/>
        <label>2</label>
    </ligand>
</feature>
<feature type="binding site" description="in LIMBS binding site" evidence="3">
    <location>
        <position position="249"/>
    </location>
    <ligand>
        <name>Ca(2+)</name>
        <dbReference type="ChEBI" id="CHEBI:29108"/>
        <label>2</label>
    </ligand>
</feature>
<feature type="binding site" description="in MIDAS binding site" evidence="3">
    <location>
        <position position="249"/>
    </location>
    <ligand>
        <name>Mg(2+)</name>
        <dbReference type="ChEBI" id="CHEBI:18420"/>
    </ligand>
</feature>
<feature type="binding site" description="in ADMIDAS binding site" evidence="3">
    <location>
        <position position="362"/>
    </location>
    <ligand>
        <name>Ca(2+)</name>
        <dbReference type="ChEBI" id="CHEBI:29108"/>
        <label>1</label>
    </ligand>
</feature>
<feature type="modified residue" description="Phosphothreonine" evidence="3">
    <location>
        <position position="778"/>
    </location>
</feature>
<feature type="modified residue" description="Phosphotyrosine" evidence="3">
    <location>
        <position position="784"/>
    </location>
</feature>
<feature type="modified residue" description="Phosphoserine" evidence="3">
    <location>
        <position position="786"/>
    </location>
</feature>
<feature type="modified residue" description="Phosphothreonine" evidence="3">
    <location>
        <position position="790"/>
    </location>
</feature>
<feature type="modified residue" description="N6-acetyllysine; alternate" evidence="3">
    <location>
        <position position="795"/>
    </location>
</feature>
<feature type="glycosylation site" description="N-linked (GlcNAc...) asparagine" evidence="6">
    <location>
        <position position="50"/>
    </location>
</feature>
<feature type="glycosylation site" description="N-linked (GlcNAc...) asparagine" evidence="6">
    <location>
        <position position="94"/>
    </location>
</feature>
<feature type="glycosylation site" description="N-linked (GlcNAc...) asparagine" evidence="6">
    <location>
        <position position="97"/>
    </location>
</feature>
<feature type="glycosylation site" description="N-linked (GlcNAc...) asparagine" evidence="6">
    <location>
        <position position="212"/>
    </location>
</feature>
<feature type="glycosylation site" description="N-linked (GlcNAc...) asparagine" evidence="6">
    <location>
        <position position="269"/>
    </location>
</feature>
<feature type="glycosylation site" description="N-linked (GlcNAc...) asparagine" evidence="6">
    <location>
        <position position="363"/>
    </location>
</feature>
<feature type="glycosylation site" description="N-linked (GlcNAc...) asparagine" evidence="6">
    <location>
        <position position="406"/>
    </location>
</feature>
<feature type="glycosylation site" description="N-linked (GlcNAc...) asparagine" evidence="6">
    <location>
        <position position="417"/>
    </location>
</feature>
<feature type="glycosylation site" description="N-linked (GlcNAc...) asparagine" evidence="6">
    <location>
        <position position="482"/>
    </location>
</feature>
<feature type="glycosylation site" description="N-linked (GlcNAc...) asparagine" evidence="6">
    <location>
        <position position="521"/>
    </location>
</feature>
<feature type="glycosylation site" description="N-linked (GlcNAc...) asparagine" evidence="6">
    <location>
        <position position="585"/>
    </location>
</feature>
<feature type="glycosylation site" description="N-linked (GlcNAc...) asparagine" evidence="6">
    <location>
        <position position="670"/>
    </location>
</feature>
<feature type="disulfide bond" evidence="3">
    <location>
        <begin position="27"/>
        <end position="45"/>
    </location>
</feature>
<feature type="disulfide bond" evidence="3">
    <location>
        <begin position="35"/>
        <end position="465"/>
    </location>
</feature>
<feature type="disulfide bond" evidence="3">
    <location>
        <begin position="38"/>
        <end position="64"/>
    </location>
</feature>
<feature type="disulfide bond" evidence="3">
    <location>
        <begin position="48"/>
        <end position="75"/>
    </location>
</feature>
<feature type="disulfide bond" evidence="3">
    <location>
        <begin position="207"/>
        <end position="213"/>
    </location>
</feature>
<feature type="disulfide bond" evidence="3">
    <location>
        <begin position="261"/>
        <end position="301"/>
    </location>
</feature>
<feature type="disulfide bond" evidence="3">
    <location>
        <begin position="401"/>
        <end position="415"/>
    </location>
</feature>
<feature type="disulfide bond" evidence="3">
    <location>
        <begin position="435"/>
        <end position="463"/>
    </location>
</feature>
<feature type="disulfide bond" evidence="7">
    <location>
        <begin position="467"/>
        <end position="487"/>
    </location>
</feature>
<feature type="disulfide bond" evidence="7">
    <location>
        <begin position="478"/>
        <end position="490"/>
    </location>
</feature>
<feature type="disulfide bond" evidence="7">
    <location>
        <begin position="492"/>
        <end position="501"/>
    </location>
</feature>
<feature type="disulfide bond" evidence="7">
    <location>
        <begin position="503"/>
        <end position="534"/>
    </location>
</feature>
<feature type="disulfide bond" evidence="7">
    <location>
        <begin position="517"/>
        <end position="532"/>
    </location>
</feature>
<feature type="disulfide bond" evidence="7">
    <location>
        <begin position="526"/>
        <end position="537"/>
    </location>
</feature>
<feature type="disulfide bond" evidence="7">
    <location>
        <begin position="539"/>
        <end position="554"/>
    </location>
</feature>
<feature type="disulfide bond" evidence="7">
    <location>
        <begin position="556"/>
        <end position="577"/>
    </location>
</feature>
<feature type="disulfide bond" evidence="7">
    <location>
        <begin position="561"/>
        <end position="575"/>
    </location>
</feature>
<feature type="disulfide bond" evidence="7">
    <location>
        <begin position="569"/>
        <end position="580"/>
    </location>
</feature>
<feature type="disulfide bond" evidence="7">
    <location>
        <begin position="582"/>
        <end position="591"/>
    </location>
</feature>
<feature type="disulfide bond" evidence="7">
    <location>
        <begin position="593"/>
        <end position="616"/>
    </location>
</feature>
<feature type="disulfide bond" evidence="7">
    <location>
        <begin position="600"/>
        <end position="614"/>
    </location>
</feature>
<feature type="disulfide bond" evidence="7">
    <location>
        <begin position="608"/>
        <end position="619"/>
    </location>
</feature>
<feature type="disulfide bond" evidence="7">
    <location>
        <begin position="621"/>
        <end position="631"/>
    </location>
</feature>
<feature type="disulfide bond" evidence="3">
    <location>
        <begin position="634"/>
        <end position="637"/>
    </location>
</feature>
<feature type="disulfide bond" evidence="3">
    <location>
        <begin position="641"/>
        <end position="692"/>
    </location>
</feature>
<feature type="disulfide bond" evidence="3">
    <location>
        <begin position="647"/>
        <end position="666"/>
    </location>
</feature>
<feature type="disulfide bond" evidence="3">
    <location>
        <begin position="650"/>
        <end position="662"/>
    </location>
</feature>
<feature type="disulfide bond" evidence="3">
    <location>
        <begin position="700"/>
        <end position="724"/>
    </location>
</feature>
<feature type="cross-link" description="Glycyl lysine isopeptide (Lys-Gly) (interchain with G-Cter in SUMO1); alternate" evidence="3">
    <location>
        <position position="795"/>
    </location>
</feature>
<feature type="sequence conflict" description="In Ref. 2; AAI31846." evidence="8" ref="2">
    <original>H</original>
    <variation>Q</variation>
    <location>
        <position position="76"/>
    </location>
</feature>
<feature type="sequence conflict" description="In Ref. 2; AAI31846." evidence="8" ref="2">
    <original>K</original>
    <variation>N</variation>
    <location>
        <position position="711"/>
    </location>
</feature>
<gene>
    <name type="primary">Itgb1</name>
</gene>
<accession>P49134</accession>
<accession>A2RRT8</accession>
<protein>
    <recommendedName>
        <fullName>Integrin beta-1</fullName>
    </recommendedName>
    <alternativeName>
        <fullName>Beta oligodendroglia</fullName>
        <shortName>Beta OL</shortName>
    </alternativeName>
    <alternativeName>
        <fullName>Fibronectin receptor subunit beta</fullName>
    </alternativeName>
    <alternativeName>
        <fullName>VLA-4 subunit beta</fullName>
    </alternativeName>
    <cdAntigenName>CD29</cdAntigenName>
</protein>
<dbReference type="EMBL" id="U12309">
    <property type="protein sequence ID" value="AAA86669.1"/>
    <property type="molecule type" value="mRNA"/>
</dbReference>
<dbReference type="EMBL" id="BC131845">
    <property type="protein sequence ID" value="AAI31846.1"/>
    <property type="status" value="ALT_FRAME"/>
    <property type="molecule type" value="mRNA"/>
</dbReference>
<dbReference type="PIR" id="JC4126">
    <property type="entry name" value="JC4126"/>
</dbReference>
<dbReference type="RefSeq" id="NP_058718.2">
    <property type="nucleotide sequence ID" value="NM_017022.2"/>
</dbReference>
<dbReference type="PDB" id="8OXZ">
    <property type="method" value="EM"/>
    <property type="resolution" value="3.70 A"/>
    <property type="chains" value="Q=1-799"/>
</dbReference>
<dbReference type="PDBsum" id="8OXZ"/>
<dbReference type="EMDB" id="EMD-17269"/>
<dbReference type="EMDB" id="EMD-17270"/>
<dbReference type="SMR" id="P49134"/>
<dbReference type="BioGRID" id="246668">
    <property type="interactions" value="10"/>
</dbReference>
<dbReference type="CORUM" id="P49134"/>
<dbReference type="FunCoup" id="P49134">
    <property type="interactions" value="3023"/>
</dbReference>
<dbReference type="IntAct" id="P49134">
    <property type="interactions" value="4"/>
</dbReference>
<dbReference type="MINT" id="P49134"/>
<dbReference type="STRING" id="10116.ENSRNOP00000014785"/>
<dbReference type="GlyCosmos" id="P49134">
    <property type="glycosylation" value="12 sites, No reported glycans"/>
</dbReference>
<dbReference type="GlyGen" id="P49134">
    <property type="glycosylation" value="12 sites"/>
</dbReference>
<dbReference type="iPTMnet" id="P49134"/>
<dbReference type="PhosphoSitePlus" id="P49134"/>
<dbReference type="jPOST" id="P49134"/>
<dbReference type="PaxDb" id="10116-ENSRNOP00000014785"/>
<dbReference type="GeneID" id="24511"/>
<dbReference type="KEGG" id="rno:24511"/>
<dbReference type="UCSC" id="RGD:2927">
    <property type="organism name" value="rat"/>
</dbReference>
<dbReference type="AGR" id="RGD:2927"/>
<dbReference type="CTD" id="3688"/>
<dbReference type="RGD" id="2927">
    <property type="gene designation" value="Itgb1"/>
</dbReference>
<dbReference type="eggNOG" id="KOG1226">
    <property type="taxonomic scope" value="Eukaryota"/>
</dbReference>
<dbReference type="InParanoid" id="P49134"/>
<dbReference type="OrthoDB" id="410592at2759"/>
<dbReference type="PhylomeDB" id="P49134"/>
<dbReference type="TreeFam" id="TF105392"/>
<dbReference type="Reactome" id="R-RNO-1566948">
    <property type="pathway name" value="Elastic fibre formation"/>
</dbReference>
<dbReference type="Reactome" id="R-RNO-1566977">
    <property type="pathway name" value="Fibronectin matrix formation"/>
</dbReference>
<dbReference type="Reactome" id="R-RNO-198933">
    <property type="pathway name" value="Immunoregulatory interactions between a Lymphoid and a non-Lymphoid cell"/>
</dbReference>
<dbReference type="Reactome" id="R-RNO-202733">
    <property type="pathway name" value="Cell surface interactions at the vascular wall"/>
</dbReference>
<dbReference type="Reactome" id="R-RNO-210991">
    <property type="pathway name" value="Basigin interactions"/>
</dbReference>
<dbReference type="Reactome" id="R-RNO-2129379">
    <property type="pathway name" value="Molecules associated with elastic fibres"/>
</dbReference>
<dbReference type="Reactome" id="R-RNO-216083">
    <property type="pathway name" value="Integrin cell surface interactions"/>
</dbReference>
<dbReference type="Reactome" id="R-RNO-2173789">
    <property type="pathway name" value="TGF-beta receptor signaling activates SMADs"/>
</dbReference>
<dbReference type="Reactome" id="R-RNO-3000157">
    <property type="pathway name" value="Laminin interactions"/>
</dbReference>
<dbReference type="Reactome" id="R-RNO-3000170">
    <property type="pathway name" value="Syndecan interactions"/>
</dbReference>
<dbReference type="Reactome" id="R-RNO-3000178">
    <property type="pathway name" value="ECM proteoglycans"/>
</dbReference>
<dbReference type="Reactome" id="R-RNO-445144">
    <property type="pathway name" value="Signal transduction by L1"/>
</dbReference>
<dbReference type="Reactome" id="R-RNO-446343">
    <property type="pathway name" value="Localization of the PINCH-ILK-PARVIN complex to focal adhesions"/>
</dbReference>
<dbReference type="Reactome" id="R-RNO-8874081">
    <property type="pathway name" value="MET activates PTK2 signaling"/>
</dbReference>
<dbReference type="Reactome" id="R-RNO-8875513">
    <property type="pathway name" value="MET interacts with TNS proteins"/>
</dbReference>
<dbReference type="Reactome" id="R-RNO-9013149">
    <property type="pathway name" value="RAC1 GTPase cycle"/>
</dbReference>
<dbReference type="Reactome" id="R-RNO-9013404">
    <property type="pathway name" value="RAC2 GTPase cycle"/>
</dbReference>
<dbReference type="Reactome" id="R-RNO-9013408">
    <property type="pathway name" value="RHOG GTPase cycle"/>
</dbReference>
<dbReference type="Reactome" id="R-RNO-9634597">
    <property type="pathway name" value="GPER1 signaling"/>
</dbReference>
<dbReference type="Reactome" id="R-RNO-9860927">
    <property type="pathway name" value="Turbulent (oscillatory, disturbed) flow shear stress activates signaling by PIEZO1 and integrins in endothelial cells"/>
</dbReference>
<dbReference type="PRO" id="PR:P49134"/>
<dbReference type="Proteomes" id="UP000002494">
    <property type="component" value="Unplaced"/>
</dbReference>
<dbReference type="GO" id="GO:0001669">
    <property type="term" value="C:acrosomal vesicle"/>
    <property type="evidence" value="ECO:0000314"/>
    <property type="project" value="RGD"/>
</dbReference>
<dbReference type="GO" id="GO:0005912">
    <property type="term" value="C:adherens junction"/>
    <property type="evidence" value="ECO:0000314"/>
    <property type="project" value="RGD"/>
</dbReference>
<dbReference type="GO" id="GO:0005604">
    <property type="term" value="C:basement membrane"/>
    <property type="evidence" value="ECO:0000314"/>
    <property type="project" value="RGD"/>
</dbReference>
<dbReference type="GO" id="GO:0009986">
    <property type="term" value="C:cell surface"/>
    <property type="evidence" value="ECO:0000314"/>
    <property type="project" value="RGD"/>
</dbReference>
<dbReference type="GO" id="GO:0005911">
    <property type="term" value="C:cell-cell junction"/>
    <property type="evidence" value="ECO:0000314"/>
    <property type="project" value="RGD"/>
</dbReference>
<dbReference type="GO" id="GO:0150053">
    <property type="term" value="C:cerebellar climbing fiber to Purkinje cell synapse"/>
    <property type="evidence" value="ECO:0000266"/>
    <property type="project" value="RGD"/>
</dbReference>
<dbReference type="GO" id="GO:0005737">
    <property type="term" value="C:cytoplasm"/>
    <property type="evidence" value="ECO:0000266"/>
    <property type="project" value="RGD"/>
</dbReference>
<dbReference type="GO" id="GO:0031410">
    <property type="term" value="C:cytoplasmic vesicle"/>
    <property type="evidence" value="ECO:0000266"/>
    <property type="project" value="RGD"/>
</dbReference>
<dbReference type="GO" id="GO:0043197">
    <property type="term" value="C:dendritic spine"/>
    <property type="evidence" value="ECO:0000266"/>
    <property type="project" value="RGD"/>
</dbReference>
<dbReference type="GO" id="GO:0009897">
    <property type="term" value="C:external side of plasma membrane"/>
    <property type="evidence" value="ECO:0000266"/>
    <property type="project" value="RGD"/>
</dbReference>
<dbReference type="GO" id="GO:0030175">
    <property type="term" value="C:filopodium"/>
    <property type="evidence" value="ECO:0000266"/>
    <property type="project" value="RGD"/>
</dbReference>
<dbReference type="GO" id="GO:0005925">
    <property type="term" value="C:focal adhesion"/>
    <property type="evidence" value="ECO:0000314"/>
    <property type="project" value="RGD"/>
</dbReference>
<dbReference type="GO" id="GO:0097386">
    <property type="term" value="C:glial cell projection"/>
    <property type="evidence" value="ECO:0000314"/>
    <property type="project" value="ARUK-UCL"/>
</dbReference>
<dbReference type="GO" id="GO:0098978">
    <property type="term" value="C:glutamatergic synapse"/>
    <property type="evidence" value="ECO:0000314"/>
    <property type="project" value="SynGO"/>
</dbReference>
<dbReference type="GO" id="GO:0098690">
    <property type="term" value="C:glycinergic synapse"/>
    <property type="evidence" value="ECO:0000314"/>
    <property type="project" value="SynGO"/>
</dbReference>
<dbReference type="GO" id="GO:0030056">
    <property type="term" value="C:hemidesmosome"/>
    <property type="evidence" value="ECO:0000314"/>
    <property type="project" value="RGD"/>
</dbReference>
<dbReference type="GO" id="GO:0034665">
    <property type="term" value="C:integrin alpha1-beta1 complex"/>
    <property type="evidence" value="ECO:0000266"/>
    <property type="project" value="RGD"/>
</dbReference>
<dbReference type="GO" id="GO:0034680">
    <property type="term" value="C:integrin alpha10-beta1 complex"/>
    <property type="evidence" value="ECO:0000266"/>
    <property type="project" value="RGD"/>
</dbReference>
<dbReference type="GO" id="GO:0034681">
    <property type="term" value="C:integrin alpha11-beta1 complex"/>
    <property type="evidence" value="ECO:0000266"/>
    <property type="project" value="RGD"/>
</dbReference>
<dbReference type="GO" id="GO:0034666">
    <property type="term" value="C:integrin alpha2-beta1 complex"/>
    <property type="evidence" value="ECO:0000266"/>
    <property type="project" value="RGD"/>
</dbReference>
<dbReference type="GO" id="GO:0034667">
    <property type="term" value="C:integrin alpha3-beta1 complex"/>
    <property type="evidence" value="ECO:0000314"/>
    <property type="project" value="RGD"/>
</dbReference>
<dbReference type="GO" id="GO:0034668">
    <property type="term" value="C:integrin alpha4-beta1 complex"/>
    <property type="evidence" value="ECO:0000266"/>
    <property type="project" value="RGD"/>
</dbReference>
<dbReference type="GO" id="GO:0034674">
    <property type="term" value="C:integrin alpha5-beta1 complex"/>
    <property type="evidence" value="ECO:0000266"/>
    <property type="project" value="RGD"/>
</dbReference>
<dbReference type="GO" id="GO:0034675">
    <property type="term" value="C:integrin alpha6-beta1 complex"/>
    <property type="evidence" value="ECO:0000266"/>
    <property type="project" value="RGD"/>
</dbReference>
<dbReference type="GO" id="GO:0034677">
    <property type="term" value="C:integrin alpha7-beta1 complex"/>
    <property type="evidence" value="ECO:0000266"/>
    <property type="project" value="RGD"/>
</dbReference>
<dbReference type="GO" id="GO:0034679">
    <property type="term" value="C:integrin alpha9-beta1 complex"/>
    <property type="evidence" value="ECO:0000314"/>
    <property type="project" value="RGD"/>
</dbReference>
<dbReference type="GO" id="GO:0034682">
    <property type="term" value="C:integrin alphav-beta1 complex"/>
    <property type="evidence" value="ECO:0000266"/>
    <property type="project" value="RGD"/>
</dbReference>
<dbReference type="GO" id="GO:0008305">
    <property type="term" value="C:integrin complex"/>
    <property type="evidence" value="ECO:0000314"/>
    <property type="project" value="RGD"/>
</dbReference>
<dbReference type="GO" id="GO:0014704">
    <property type="term" value="C:intercalated disc"/>
    <property type="evidence" value="ECO:0000266"/>
    <property type="project" value="RGD"/>
</dbReference>
<dbReference type="GO" id="GO:0030027">
    <property type="term" value="C:lamellipodium"/>
    <property type="evidence" value="ECO:0007669"/>
    <property type="project" value="UniProtKB-SubCell"/>
</dbReference>
<dbReference type="GO" id="GO:0042470">
    <property type="term" value="C:melanosome"/>
    <property type="evidence" value="ECO:0007669"/>
    <property type="project" value="UniProtKB-SubCell"/>
</dbReference>
<dbReference type="GO" id="GO:0016020">
    <property type="term" value="C:membrane"/>
    <property type="evidence" value="ECO:0000266"/>
    <property type="project" value="RGD"/>
</dbReference>
<dbReference type="GO" id="GO:0045121">
    <property type="term" value="C:membrane raft"/>
    <property type="evidence" value="ECO:0000266"/>
    <property type="project" value="RGD"/>
</dbReference>
<dbReference type="GO" id="GO:0035748">
    <property type="term" value="C:myelin sheath abaxonal region"/>
    <property type="evidence" value="ECO:0000266"/>
    <property type="project" value="RGD"/>
</dbReference>
<dbReference type="GO" id="GO:0031594">
    <property type="term" value="C:neuromuscular junction"/>
    <property type="evidence" value="ECO:0000266"/>
    <property type="project" value="RGD"/>
</dbReference>
<dbReference type="GO" id="GO:0048471">
    <property type="term" value="C:perinuclear region of cytoplasm"/>
    <property type="evidence" value="ECO:0000266"/>
    <property type="project" value="RGD"/>
</dbReference>
<dbReference type="GO" id="GO:0005886">
    <property type="term" value="C:plasma membrane"/>
    <property type="evidence" value="ECO:0000266"/>
    <property type="project" value="RGD"/>
</dbReference>
<dbReference type="GO" id="GO:0045211">
    <property type="term" value="C:postsynaptic membrane"/>
    <property type="evidence" value="ECO:0000314"/>
    <property type="project" value="SynGO"/>
</dbReference>
<dbReference type="GO" id="GO:0043235">
    <property type="term" value="C:receptor complex"/>
    <property type="evidence" value="ECO:0000266"/>
    <property type="project" value="RGD"/>
</dbReference>
<dbReference type="GO" id="GO:0055037">
    <property type="term" value="C:recycling endosome"/>
    <property type="evidence" value="ECO:0007669"/>
    <property type="project" value="UniProtKB-SubCell"/>
</dbReference>
<dbReference type="GO" id="GO:0032587">
    <property type="term" value="C:ruffle membrane"/>
    <property type="evidence" value="ECO:0000266"/>
    <property type="project" value="RGD"/>
</dbReference>
<dbReference type="GO" id="GO:0042383">
    <property type="term" value="C:sarcolemma"/>
    <property type="evidence" value="ECO:0000266"/>
    <property type="project" value="RGD"/>
</dbReference>
<dbReference type="GO" id="GO:0098685">
    <property type="term" value="C:Schaffer collateral - CA1 synapse"/>
    <property type="evidence" value="ECO:0000266"/>
    <property type="project" value="RGD"/>
</dbReference>
<dbReference type="GO" id="GO:0045202">
    <property type="term" value="C:synapse"/>
    <property type="evidence" value="ECO:0000266"/>
    <property type="project" value="RGD"/>
</dbReference>
<dbReference type="GO" id="GO:0097060">
    <property type="term" value="C:synaptic membrane"/>
    <property type="evidence" value="ECO:0000266"/>
    <property type="project" value="RGD"/>
</dbReference>
<dbReference type="GO" id="GO:0003779">
    <property type="term" value="F:actin binding"/>
    <property type="evidence" value="ECO:0000314"/>
    <property type="project" value="RGD"/>
</dbReference>
<dbReference type="GO" id="GO:0051393">
    <property type="term" value="F:alpha-actinin binding"/>
    <property type="evidence" value="ECO:0000314"/>
    <property type="project" value="RGD"/>
</dbReference>
<dbReference type="GO" id="GO:0005509">
    <property type="term" value="F:calcium ion binding"/>
    <property type="evidence" value="ECO:0000266"/>
    <property type="project" value="RGD"/>
</dbReference>
<dbReference type="GO" id="GO:0050839">
    <property type="term" value="F:cell adhesion molecule binding"/>
    <property type="evidence" value="ECO:0000266"/>
    <property type="project" value="RGD"/>
</dbReference>
<dbReference type="GO" id="GO:0005518">
    <property type="term" value="F:collagen binding"/>
    <property type="evidence" value="ECO:0000314"/>
    <property type="project" value="RGD"/>
</dbReference>
<dbReference type="GO" id="GO:0098639">
    <property type="term" value="F:collagen binding involved in cell-matrix adhesion"/>
    <property type="evidence" value="ECO:0000266"/>
    <property type="project" value="RGD"/>
</dbReference>
<dbReference type="GO" id="GO:0001968">
    <property type="term" value="F:fibronectin binding"/>
    <property type="evidence" value="ECO:0000314"/>
    <property type="project" value="RGD"/>
</dbReference>
<dbReference type="GO" id="GO:0005178">
    <property type="term" value="F:integrin binding"/>
    <property type="evidence" value="ECO:0000315"/>
    <property type="project" value="RGD"/>
</dbReference>
<dbReference type="GO" id="GO:0098640">
    <property type="term" value="F:integrin binding involved in cell-matrix adhesion"/>
    <property type="evidence" value="ECO:0000250"/>
    <property type="project" value="UniProtKB"/>
</dbReference>
<dbReference type="GO" id="GO:0019900">
    <property type="term" value="F:kinase binding"/>
    <property type="evidence" value="ECO:0000353"/>
    <property type="project" value="RGD"/>
</dbReference>
<dbReference type="GO" id="GO:0043236">
    <property type="term" value="F:laminin binding"/>
    <property type="evidence" value="ECO:0000314"/>
    <property type="project" value="RGD"/>
</dbReference>
<dbReference type="GO" id="GO:0000287">
    <property type="term" value="F:magnesium ion binding"/>
    <property type="evidence" value="ECO:0000266"/>
    <property type="project" value="RGD"/>
</dbReference>
<dbReference type="GO" id="GO:0002020">
    <property type="term" value="F:protease binding"/>
    <property type="evidence" value="ECO:0000353"/>
    <property type="project" value="RGD"/>
</dbReference>
<dbReference type="GO" id="GO:0019904">
    <property type="term" value="F:protein domain specific binding"/>
    <property type="evidence" value="ECO:0000314"/>
    <property type="project" value="RGD"/>
</dbReference>
<dbReference type="GO" id="GO:0046982">
    <property type="term" value="F:protein heterodimerization activity"/>
    <property type="evidence" value="ECO:0000266"/>
    <property type="project" value="RGD"/>
</dbReference>
<dbReference type="GO" id="GO:0019901">
    <property type="term" value="F:protein kinase binding"/>
    <property type="evidence" value="ECO:0000353"/>
    <property type="project" value="RGD"/>
</dbReference>
<dbReference type="GO" id="GO:1990782">
    <property type="term" value="F:protein tyrosine kinase binding"/>
    <property type="evidence" value="ECO:0000266"/>
    <property type="project" value="RGD"/>
</dbReference>
<dbReference type="GO" id="GO:0044877">
    <property type="term" value="F:protein-containing complex binding"/>
    <property type="evidence" value="ECO:0000315"/>
    <property type="project" value="RGD"/>
</dbReference>
<dbReference type="GO" id="GO:0038023">
    <property type="term" value="F:signaling receptor activity"/>
    <property type="evidence" value="ECO:0000266"/>
    <property type="project" value="RGD"/>
</dbReference>
<dbReference type="GO" id="GO:0005102">
    <property type="term" value="F:signaling receptor binding"/>
    <property type="evidence" value="ECO:0000353"/>
    <property type="project" value="RGD"/>
</dbReference>
<dbReference type="GO" id="GO:0001525">
    <property type="term" value="P:angiogenesis"/>
    <property type="evidence" value="ECO:0000266"/>
    <property type="project" value="RGD"/>
</dbReference>
<dbReference type="GO" id="GO:0048675">
    <property type="term" value="P:axon extension"/>
    <property type="evidence" value="ECO:0000266"/>
    <property type="project" value="RGD"/>
</dbReference>
<dbReference type="GO" id="GO:0071711">
    <property type="term" value="P:basement membrane organization"/>
    <property type="evidence" value="ECO:0000266"/>
    <property type="project" value="RGD"/>
</dbReference>
<dbReference type="GO" id="GO:0070830">
    <property type="term" value="P:bicellular tight junction assembly"/>
    <property type="evidence" value="ECO:0000315"/>
    <property type="project" value="RGD"/>
</dbReference>
<dbReference type="GO" id="GO:0007161">
    <property type="term" value="P:calcium-independent cell-matrix adhesion"/>
    <property type="evidence" value="ECO:0000266"/>
    <property type="project" value="RGD"/>
</dbReference>
<dbReference type="GO" id="GO:0060912">
    <property type="term" value="P:cardiac cell fate specification"/>
    <property type="evidence" value="ECO:0000266"/>
    <property type="project" value="RGD"/>
</dbReference>
<dbReference type="GO" id="GO:0055007">
    <property type="term" value="P:cardiac muscle cell differentiation"/>
    <property type="evidence" value="ECO:0000266"/>
    <property type="project" value="RGD"/>
</dbReference>
<dbReference type="GO" id="GO:0060379">
    <property type="term" value="P:cardiac muscle cell myoblast differentiation"/>
    <property type="evidence" value="ECO:0000266"/>
    <property type="project" value="RGD"/>
</dbReference>
<dbReference type="GO" id="GO:0023035">
    <property type="term" value="P:CD40 signaling pathway"/>
    <property type="evidence" value="ECO:0000266"/>
    <property type="project" value="RGD"/>
</dbReference>
<dbReference type="GO" id="GO:0007155">
    <property type="term" value="P:cell adhesion"/>
    <property type="evidence" value="ECO:0000266"/>
    <property type="project" value="RGD"/>
</dbReference>
<dbReference type="GO" id="GO:0033627">
    <property type="term" value="P:cell adhesion mediated by integrin"/>
    <property type="evidence" value="ECO:0000316"/>
    <property type="project" value="ARUK-UCL"/>
</dbReference>
<dbReference type="GO" id="GO:0016477">
    <property type="term" value="P:cell migration"/>
    <property type="evidence" value="ECO:0000318"/>
    <property type="project" value="GO_Central"/>
</dbReference>
<dbReference type="GO" id="GO:0002042">
    <property type="term" value="P:cell migration involved in sprouting angiogenesis"/>
    <property type="evidence" value="ECO:0000266"/>
    <property type="project" value="RGD"/>
</dbReference>
<dbReference type="GO" id="GO:0008283">
    <property type="term" value="P:cell population proliferation"/>
    <property type="evidence" value="ECO:0000266"/>
    <property type="project" value="RGD"/>
</dbReference>
<dbReference type="GO" id="GO:0030030">
    <property type="term" value="P:cell projection organization"/>
    <property type="evidence" value="ECO:0000315"/>
    <property type="project" value="ARUK-UCL"/>
</dbReference>
<dbReference type="GO" id="GO:0098609">
    <property type="term" value="P:cell-cell adhesion"/>
    <property type="evidence" value="ECO:0000318"/>
    <property type="project" value="GO_Central"/>
</dbReference>
<dbReference type="GO" id="GO:0033631">
    <property type="term" value="P:cell-cell adhesion mediated by integrin"/>
    <property type="evidence" value="ECO:0000266"/>
    <property type="project" value="RGD"/>
</dbReference>
<dbReference type="GO" id="GO:0007160">
    <property type="term" value="P:cell-matrix adhesion"/>
    <property type="evidence" value="ECO:0000266"/>
    <property type="project" value="RGD"/>
</dbReference>
<dbReference type="GO" id="GO:0031589">
    <property type="term" value="P:cell-substrate adhesion"/>
    <property type="evidence" value="ECO:0000266"/>
    <property type="project" value="RGD"/>
</dbReference>
<dbReference type="GO" id="GO:0071479">
    <property type="term" value="P:cellular response to ionizing radiation"/>
    <property type="evidence" value="ECO:0000270"/>
    <property type="project" value="RGD"/>
</dbReference>
<dbReference type="GO" id="GO:0071404">
    <property type="term" value="P:cellular response to low-density lipoprotein particle stimulus"/>
    <property type="evidence" value="ECO:0000250"/>
    <property type="project" value="UniProtKB"/>
</dbReference>
<dbReference type="GO" id="GO:0071260">
    <property type="term" value="P:cellular response to mechanical stimulus"/>
    <property type="evidence" value="ECO:0000270"/>
    <property type="project" value="RGD"/>
</dbReference>
<dbReference type="GO" id="GO:0071305">
    <property type="term" value="P:cellular response to vitamin D"/>
    <property type="evidence" value="ECO:0000270"/>
    <property type="project" value="RGD"/>
</dbReference>
<dbReference type="GO" id="GO:0048813">
    <property type="term" value="P:dendrite morphogenesis"/>
    <property type="evidence" value="ECO:0000266"/>
    <property type="project" value="RGD"/>
</dbReference>
<dbReference type="GO" id="GO:0000132">
    <property type="term" value="P:establishment of mitotic spindle orientation"/>
    <property type="evidence" value="ECO:0000266"/>
    <property type="project" value="RGD"/>
</dbReference>
<dbReference type="GO" id="GO:0097368">
    <property type="term" value="P:establishment of Sertoli cell barrier"/>
    <property type="evidence" value="ECO:0000270"/>
    <property type="project" value="RGD"/>
</dbReference>
<dbReference type="GO" id="GO:0021943">
    <property type="term" value="P:formation of radial glial scaffolds"/>
    <property type="evidence" value="ECO:0000266"/>
    <property type="project" value="RGD"/>
</dbReference>
<dbReference type="GO" id="GO:0000082">
    <property type="term" value="P:G1/S transition of mitotic cell cycle"/>
    <property type="evidence" value="ECO:0000266"/>
    <property type="project" value="RGD"/>
</dbReference>
<dbReference type="GO" id="GO:0008354">
    <property type="term" value="P:germ cell migration"/>
    <property type="evidence" value="ECO:0000266"/>
    <property type="project" value="RGD"/>
</dbReference>
<dbReference type="GO" id="GO:0034113">
    <property type="term" value="P:heterotypic cell-cell adhesion"/>
    <property type="evidence" value="ECO:0000266"/>
    <property type="project" value="RGD"/>
</dbReference>
<dbReference type="GO" id="GO:0001701">
    <property type="term" value="P:in utero embryonic development"/>
    <property type="evidence" value="ECO:0000266"/>
    <property type="project" value="RGD"/>
</dbReference>
<dbReference type="GO" id="GO:0007229">
    <property type="term" value="P:integrin-mediated signaling pathway"/>
    <property type="evidence" value="ECO:0000266"/>
    <property type="project" value="RGD"/>
</dbReference>
<dbReference type="GO" id="GO:0030032">
    <property type="term" value="P:lamellipodium assembly"/>
    <property type="evidence" value="ECO:0000315"/>
    <property type="project" value="ARUK-UCL"/>
</dbReference>
<dbReference type="GO" id="GO:0007159">
    <property type="term" value="P:leukocyte cell-cell adhesion"/>
    <property type="evidence" value="ECO:0000266"/>
    <property type="project" value="RGD"/>
</dbReference>
<dbReference type="GO" id="GO:0050901">
    <property type="term" value="P:leukocyte tethering or rolling"/>
    <property type="evidence" value="ECO:0000266"/>
    <property type="project" value="RGD"/>
</dbReference>
<dbReference type="GO" id="GO:0098880">
    <property type="term" value="P:maintenance of postsynaptic specialization structure"/>
    <property type="evidence" value="ECO:0000314"/>
    <property type="project" value="SynGO"/>
</dbReference>
<dbReference type="GO" id="GO:0060135">
    <property type="term" value="P:maternal process involved in female pregnancy"/>
    <property type="evidence" value="ECO:0000270"/>
    <property type="project" value="RGD"/>
</dbReference>
<dbReference type="GO" id="GO:0048333">
    <property type="term" value="P:mesodermal cell differentiation"/>
    <property type="evidence" value="ECO:0000266"/>
    <property type="project" value="RGD"/>
</dbReference>
<dbReference type="GO" id="GO:0050804">
    <property type="term" value="P:modulation of chemical synaptic transmission"/>
    <property type="evidence" value="ECO:0000266"/>
    <property type="project" value="RGD"/>
</dbReference>
<dbReference type="GO" id="GO:0007517">
    <property type="term" value="P:muscle organ development"/>
    <property type="evidence" value="ECO:0007669"/>
    <property type="project" value="UniProtKB-KW"/>
</dbReference>
<dbReference type="GO" id="GO:0045445">
    <property type="term" value="P:myoblast differentiation"/>
    <property type="evidence" value="ECO:0000250"/>
    <property type="project" value="UniProtKB"/>
</dbReference>
<dbReference type="GO" id="GO:0048626">
    <property type="term" value="P:myoblast fate specification"/>
    <property type="evidence" value="ECO:0000266"/>
    <property type="project" value="RGD"/>
</dbReference>
<dbReference type="GO" id="GO:0007520">
    <property type="term" value="P:myoblast fusion"/>
    <property type="evidence" value="ECO:0000250"/>
    <property type="project" value="UniProtKB"/>
</dbReference>
<dbReference type="GO" id="GO:2000811">
    <property type="term" value="P:negative regulation of anoikis"/>
    <property type="evidence" value="ECO:0000266"/>
    <property type="project" value="RGD"/>
</dbReference>
<dbReference type="GO" id="GO:0043066">
    <property type="term" value="P:negative regulation of apoptotic process"/>
    <property type="evidence" value="ECO:0000314"/>
    <property type="project" value="RGD"/>
</dbReference>
<dbReference type="GO" id="GO:0008285">
    <property type="term" value="P:negative regulation of cell population proliferation"/>
    <property type="evidence" value="ECO:0000315"/>
    <property type="project" value="RGD"/>
</dbReference>
<dbReference type="GO" id="GO:0031345">
    <property type="term" value="P:negative regulation of cell projection organization"/>
    <property type="evidence" value="ECO:0000315"/>
    <property type="project" value="RGD"/>
</dbReference>
<dbReference type="GO" id="GO:0045665">
    <property type="term" value="P:negative regulation of neuron differentiation"/>
    <property type="evidence" value="ECO:0000315"/>
    <property type="project" value="RGD"/>
</dbReference>
<dbReference type="GO" id="GO:0035024">
    <property type="term" value="P:negative regulation of Rho protein signal transduction"/>
    <property type="evidence" value="ECO:0000266"/>
    <property type="project" value="RGD"/>
</dbReference>
<dbReference type="GO" id="GO:0045906">
    <property type="term" value="P:negative regulation of vasoconstriction"/>
    <property type="evidence" value="ECO:0000250"/>
    <property type="project" value="UniProtKB"/>
</dbReference>
<dbReference type="GO" id="GO:0007405">
    <property type="term" value="P:neuroblast proliferation"/>
    <property type="evidence" value="ECO:0000266"/>
    <property type="project" value="RGD"/>
</dbReference>
<dbReference type="GO" id="GO:0030182">
    <property type="term" value="P:neuron differentiation"/>
    <property type="evidence" value="ECO:0000266"/>
    <property type="project" value="RGD"/>
</dbReference>
<dbReference type="GO" id="GO:0031175">
    <property type="term" value="P:neuron projection development"/>
    <property type="evidence" value="ECO:0000266"/>
    <property type="project" value="RGD"/>
</dbReference>
<dbReference type="GO" id="GO:0006909">
    <property type="term" value="P:phagocytosis"/>
    <property type="evidence" value="ECO:0000315"/>
    <property type="project" value="ARUK-UCL"/>
</dbReference>
<dbReference type="GO" id="GO:0045766">
    <property type="term" value="P:positive regulation of angiogenesis"/>
    <property type="evidence" value="ECO:0000266"/>
    <property type="project" value="RGD"/>
</dbReference>
<dbReference type="GO" id="GO:0043065">
    <property type="term" value="P:positive regulation of apoptotic process"/>
    <property type="evidence" value="ECO:0000266"/>
    <property type="project" value="RGD"/>
</dbReference>
<dbReference type="GO" id="GO:0030335">
    <property type="term" value="P:positive regulation of cell migration"/>
    <property type="evidence" value="ECO:0000315"/>
    <property type="project" value="UniProtKB"/>
</dbReference>
<dbReference type="GO" id="GO:0010811">
    <property type="term" value="P:positive regulation of cell-substrate adhesion"/>
    <property type="evidence" value="ECO:0000315"/>
    <property type="project" value="RGD"/>
</dbReference>
<dbReference type="GO" id="GO:0045807">
    <property type="term" value="P:positive regulation of endocytosis"/>
    <property type="evidence" value="ECO:0000315"/>
    <property type="project" value="RGD"/>
</dbReference>
<dbReference type="GO" id="GO:0045743">
    <property type="term" value="P:positive regulation of fibroblast growth factor receptor signaling pathway"/>
    <property type="evidence" value="ECO:0000266"/>
    <property type="project" value="RGD"/>
</dbReference>
<dbReference type="GO" id="GO:0010763">
    <property type="term" value="P:positive regulation of fibroblast migration"/>
    <property type="evidence" value="ECO:0000266"/>
    <property type="project" value="RGD"/>
</dbReference>
<dbReference type="GO" id="GO:0051951">
    <property type="term" value="P:positive regulation of glutamate uptake involved in transmission of nerve impulse"/>
    <property type="evidence" value="ECO:0000266"/>
    <property type="project" value="RGD"/>
</dbReference>
<dbReference type="GO" id="GO:0002052">
    <property type="term" value="P:positive regulation of neuroblast proliferation"/>
    <property type="evidence" value="ECO:0000266"/>
    <property type="project" value="RGD"/>
</dbReference>
<dbReference type="GO" id="GO:0045666">
    <property type="term" value="P:positive regulation of neuron differentiation"/>
    <property type="evidence" value="ECO:0000315"/>
    <property type="project" value="RGD"/>
</dbReference>
<dbReference type="GO" id="GO:0010976">
    <property type="term" value="P:positive regulation of neuron projection development"/>
    <property type="evidence" value="ECO:0000315"/>
    <property type="project" value="RGD"/>
</dbReference>
<dbReference type="GO" id="GO:0051897">
    <property type="term" value="P:positive regulation of phosphatidylinositol 3-kinase/protein kinase B signal transduction"/>
    <property type="evidence" value="ECO:0000266"/>
    <property type="project" value="RGD"/>
</dbReference>
<dbReference type="GO" id="GO:1903078">
    <property type="term" value="P:positive regulation of protein localization to plasma membrane"/>
    <property type="evidence" value="ECO:0000250"/>
    <property type="project" value="UniProtKB"/>
</dbReference>
<dbReference type="GO" id="GO:1900748">
    <property type="term" value="P:positive regulation of vascular endothelial growth factor signaling pathway"/>
    <property type="evidence" value="ECO:0000266"/>
    <property type="project" value="RGD"/>
</dbReference>
<dbReference type="GO" id="GO:0090303">
    <property type="term" value="P:positive regulation of wound healing"/>
    <property type="evidence" value="ECO:0000266"/>
    <property type="project" value="RGD"/>
</dbReference>
<dbReference type="GO" id="GO:0032594">
    <property type="term" value="P:protein transport within lipid bilayer"/>
    <property type="evidence" value="ECO:0000315"/>
    <property type="project" value="RGD"/>
</dbReference>
<dbReference type="GO" id="GO:0150103">
    <property type="term" value="P:reactive gliosis"/>
    <property type="evidence" value="ECO:0000266"/>
    <property type="project" value="RGD"/>
</dbReference>
<dbReference type="GO" id="GO:0031623">
    <property type="term" value="P:receptor internalization"/>
    <property type="evidence" value="ECO:0000250"/>
    <property type="project" value="UniProtKB"/>
</dbReference>
<dbReference type="GO" id="GO:0051726">
    <property type="term" value="P:regulation of cell cycle"/>
    <property type="evidence" value="ECO:0000266"/>
    <property type="project" value="RGD"/>
</dbReference>
<dbReference type="GO" id="GO:0010710">
    <property type="term" value="P:regulation of collagen catabolic process"/>
    <property type="evidence" value="ECO:0000250"/>
    <property type="project" value="UniProtKB"/>
</dbReference>
<dbReference type="GO" id="GO:0008277">
    <property type="term" value="P:regulation of G protein-coupled receptor signaling pathway"/>
    <property type="evidence" value="ECO:0000315"/>
    <property type="project" value="RGD"/>
</dbReference>
<dbReference type="GO" id="GO:0150054">
    <property type="term" value="P:regulation of postsynaptic neurotransmitter receptor diffusion trapping"/>
    <property type="evidence" value="ECO:0000314"/>
    <property type="project" value="SynGO"/>
</dbReference>
<dbReference type="GO" id="GO:0150003">
    <property type="term" value="P:regulation of spontaneous synaptic transmission"/>
    <property type="evidence" value="ECO:0000266"/>
    <property type="project" value="RGD"/>
</dbReference>
<dbReference type="GO" id="GO:1905806">
    <property type="term" value="P:regulation of synapse pruning"/>
    <property type="evidence" value="ECO:0000266"/>
    <property type="project" value="RGD"/>
</dbReference>
<dbReference type="GO" id="GO:0014823">
    <property type="term" value="P:response to activity"/>
    <property type="evidence" value="ECO:0000270"/>
    <property type="project" value="RGD"/>
</dbReference>
<dbReference type="GO" id="GO:0034698">
    <property type="term" value="P:response to gonadotropin"/>
    <property type="evidence" value="ECO:0000270"/>
    <property type="project" value="RGD"/>
</dbReference>
<dbReference type="GO" id="GO:0014850">
    <property type="term" value="P:response to muscle activity"/>
    <property type="evidence" value="ECO:0000266"/>
    <property type="project" value="RGD"/>
</dbReference>
<dbReference type="GO" id="GO:0031667">
    <property type="term" value="P:response to nutrient levels"/>
    <property type="evidence" value="ECO:0000270"/>
    <property type="project" value="RGD"/>
</dbReference>
<dbReference type="GO" id="GO:0071559">
    <property type="term" value="P:response to transforming growth factor beta"/>
    <property type="evidence" value="ECO:0000270"/>
    <property type="project" value="RGD"/>
</dbReference>
<dbReference type="GO" id="GO:0009410">
    <property type="term" value="P:response to xenobiotic stimulus"/>
    <property type="evidence" value="ECO:0000270"/>
    <property type="project" value="RGD"/>
</dbReference>
<dbReference type="GO" id="GO:0045214">
    <property type="term" value="P:sarcomere organization"/>
    <property type="evidence" value="ECO:0000266"/>
    <property type="project" value="RGD"/>
</dbReference>
<dbReference type="GO" id="GO:0099561">
    <property type="term" value="P:synaptic membrane adhesion to extracellular matrix"/>
    <property type="evidence" value="ECO:0000305"/>
    <property type="project" value="UniProtKB"/>
</dbReference>
<dbReference type="GO" id="GO:0001894">
    <property type="term" value="P:tissue homeostasis"/>
    <property type="evidence" value="ECO:0000315"/>
    <property type="project" value="RGD"/>
</dbReference>
<dbReference type="GO" id="GO:0008542">
    <property type="term" value="P:visual learning"/>
    <property type="evidence" value="ECO:0000266"/>
    <property type="project" value="RGD"/>
</dbReference>
<dbReference type="FunFam" id="1.20.5.100:FF:000002">
    <property type="entry name" value="Integrin beta"/>
    <property type="match status" value="1"/>
</dbReference>
<dbReference type="FunFam" id="2.10.25.10:FF:000043">
    <property type="entry name" value="Integrin beta"/>
    <property type="match status" value="1"/>
</dbReference>
<dbReference type="FunFam" id="2.10.25.10:FF:000075">
    <property type="entry name" value="Integrin beta"/>
    <property type="match status" value="1"/>
</dbReference>
<dbReference type="FunFam" id="2.10.25.10:FF:000155">
    <property type="entry name" value="Integrin beta"/>
    <property type="match status" value="1"/>
</dbReference>
<dbReference type="FunFam" id="2.60.40.1510:FF:000003">
    <property type="entry name" value="Integrin beta"/>
    <property type="match status" value="1"/>
</dbReference>
<dbReference type="FunFam" id="3.30.1680.10:FF:000005">
    <property type="entry name" value="Integrin beta"/>
    <property type="match status" value="1"/>
</dbReference>
<dbReference type="FunFam" id="3.40.50.410:FF:000002">
    <property type="entry name" value="Integrin beta"/>
    <property type="match status" value="1"/>
</dbReference>
<dbReference type="FunFam" id="4.10.1240.30:FF:000002">
    <property type="entry name" value="Integrin beta"/>
    <property type="match status" value="1"/>
</dbReference>
<dbReference type="Gene3D" id="4.10.1240.30">
    <property type="match status" value="1"/>
</dbReference>
<dbReference type="Gene3D" id="1.20.5.100">
    <property type="entry name" value="Cytochrome c1, transmembrane anchor, C-terminal"/>
    <property type="match status" value="1"/>
</dbReference>
<dbReference type="Gene3D" id="2.10.25.10">
    <property type="entry name" value="Laminin"/>
    <property type="match status" value="4"/>
</dbReference>
<dbReference type="Gene3D" id="3.30.1680.10">
    <property type="entry name" value="ligand-binding face of the semaphorins, domain 2"/>
    <property type="match status" value="1"/>
</dbReference>
<dbReference type="Gene3D" id="2.60.40.1510">
    <property type="entry name" value="ntegrin, alpha v. Chain A, domain 3"/>
    <property type="match status" value="1"/>
</dbReference>
<dbReference type="Gene3D" id="3.40.50.410">
    <property type="entry name" value="von Willebrand factor, type A domain"/>
    <property type="match status" value="1"/>
</dbReference>
<dbReference type="InterPro" id="IPR013111">
    <property type="entry name" value="EGF_extracell"/>
</dbReference>
<dbReference type="InterPro" id="IPR040622">
    <property type="entry name" value="I-EGF_1"/>
</dbReference>
<dbReference type="InterPro" id="IPR033760">
    <property type="entry name" value="Integrin_beta_N"/>
</dbReference>
<dbReference type="InterPro" id="IPR015812">
    <property type="entry name" value="Integrin_bsu"/>
</dbReference>
<dbReference type="InterPro" id="IPR014836">
    <property type="entry name" value="Integrin_bsu_cyt_dom"/>
</dbReference>
<dbReference type="InterPro" id="IPR012896">
    <property type="entry name" value="Integrin_bsu_tail"/>
</dbReference>
<dbReference type="InterPro" id="IPR036349">
    <property type="entry name" value="Integrin_bsu_tail_dom_sf"/>
</dbReference>
<dbReference type="InterPro" id="IPR002369">
    <property type="entry name" value="Integrin_bsu_VWA"/>
</dbReference>
<dbReference type="InterPro" id="IPR032695">
    <property type="entry name" value="Integrin_dom_sf"/>
</dbReference>
<dbReference type="InterPro" id="IPR016201">
    <property type="entry name" value="PSI"/>
</dbReference>
<dbReference type="InterPro" id="IPR036465">
    <property type="entry name" value="vWFA_dom_sf"/>
</dbReference>
<dbReference type="PANTHER" id="PTHR10082">
    <property type="entry name" value="INTEGRIN BETA SUBUNIT"/>
    <property type="match status" value="1"/>
</dbReference>
<dbReference type="PANTHER" id="PTHR10082:SF28">
    <property type="entry name" value="INTEGRIN BETA-1"/>
    <property type="match status" value="1"/>
</dbReference>
<dbReference type="Pfam" id="PF07974">
    <property type="entry name" value="EGF_2"/>
    <property type="match status" value="1"/>
</dbReference>
<dbReference type="Pfam" id="PF23105">
    <property type="entry name" value="EGF_integrin"/>
    <property type="match status" value="1"/>
</dbReference>
<dbReference type="Pfam" id="PF18372">
    <property type="entry name" value="I-EGF_1"/>
    <property type="match status" value="1"/>
</dbReference>
<dbReference type="Pfam" id="PF08725">
    <property type="entry name" value="Integrin_b_cyt"/>
    <property type="match status" value="1"/>
</dbReference>
<dbReference type="Pfam" id="PF07965">
    <property type="entry name" value="Integrin_B_tail"/>
    <property type="match status" value="1"/>
</dbReference>
<dbReference type="Pfam" id="PF00362">
    <property type="entry name" value="Integrin_beta"/>
    <property type="match status" value="1"/>
</dbReference>
<dbReference type="Pfam" id="PF17205">
    <property type="entry name" value="PSI_integrin"/>
    <property type="match status" value="1"/>
</dbReference>
<dbReference type="PIRSF" id="PIRSF002512">
    <property type="entry name" value="Integrin_B"/>
    <property type="match status" value="1"/>
</dbReference>
<dbReference type="PRINTS" id="PR01186">
    <property type="entry name" value="INTEGRINB"/>
</dbReference>
<dbReference type="SMART" id="SM00187">
    <property type="entry name" value="INB"/>
    <property type="match status" value="1"/>
</dbReference>
<dbReference type="SMART" id="SM01241">
    <property type="entry name" value="Integrin_b_cyt"/>
    <property type="match status" value="1"/>
</dbReference>
<dbReference type="SMART" id="SM01242">
    <property type="entry name" value="Integrin_B_tail"/>
    <property type="match status" value="1"/>
</dbReference>
<dbReference type="SMART" id="SM00423">
    <property type="entry name" value="PSI"/>
    <property type="match status" value="1"/>
</dbReference>
<dbReference type="SUPFAM" id="SSF57196">
    <property type="entry name" value="EGF/Laminin"/>
    <property type="match status" value="2"/>
</dbReference>
<dbReference type="SUPFAM" id="SSF69687">
    <property type="entry name" value="Integrin beta tail domain"/>
    <property type="match status" value="1"/>
</dbReference>
<dbReference type="SUPFAM" id="SSF69179">
    <property type="entry name" value="Integrin domains"/>
    <property type="match status" value="1"/>
</dbReference>
<dbReference type="SUPFAM" id="SSF103575">
    <property type="entry name" value="Plexin repeat"/>
    <property type="match status" value="1"/>
</dbReference>
<dbReference type="SUPFAM" id="SSF53300">
    <property type="entry name" value="vWA-like"/>
    <property type="match status" value="1"/>
</dbReference>
<dbReference type="PROSITE" id="PS00022">
    <property type="entry name" value="EGF_1"/>
    <property type="match status" value="2"/>
</dbReference>
<dbReference type="PROSITE" id="PS00243">
    <property type="entry name" value="I_EGF_1"/>
    <property type="match status" value="3"/>
</dbReference>
<dbReference type="PROSITE" id="PS52047">
    <property type="entry name" value="I_EGF_2"/>
    <property type="match status" value="4"/>
</dbReference>
<evidence type="ECO:0000250" key="1"/>
<evidence type="ECO:0000250" key="2">
    <source>
        <dbReference type="UniProtKB" id="P05106"/>
    </source>
</evidence>
<evidence type="ECO:0000250" key="3">
    <source>
        <dbReference type="UniProtKB" id="P05556"/>
    </source>
</evidence>
<evidence type="ECO:0000250" key="4">
    <source>
        <dbReference type="UniProtKB" id="P07228"/>
    </source>
</evidence>
<evidence type="ECO:0000250" key="5">
    <source>
        <dbReference type="UniProtKB" id="P09055"/>
    </source>
</evidence>
<evidence type="ECO:0000255" key="6"/>
<evidence type="ECO:0000255" key="7">
    <source>
        <dbReference type="PROSITE-ProRule" id="PRU01392"/>
    </source>
</evidence>
<evidence type="ECO:0000305" key="8"/>
<name>ITB1_RAT</name>
<organism>
    <name type="scientific">Rattus norvegicus</name>
    <name type="common">Rat</name>
    <dbReference type="NCBI Taxonomy" id="10116"/>
    <lineage>
        <taxon>Eukaryota</taxon>
        <taxon>Metazoa</taxon>
        <taxon>Chordata</taxon>
        <taxon>Craniata</taxon>
        <taxon>Vertebrata</taxon>
        <taxon>Euteleostomi</taxon>
        <taxon>Mammalia</taxon>
        <taxon>Eutheria</taxon>
        <taxon>Euarchontoglires</taxon>
        <taxon>Glires</taxon>
        <taxon>Rodentia</taxon>
        <taxon>Myomorpha</taxon>
        <taxon>Muroidea</taxon>
        <taxon>Muridae</taxon>
        <taxon>Murinae</taxon>
        <taxon>Rattus</taxon>
    </lineage>
</organism>
<keyword id="KW-0002">3D-structure</keyword>
<keyword id="KW-0007">Acetylation</keyword>
<keyword id="KW-0106">Calcium</keyword>
<keyword id="KW-0130">Cell adhesion</keyword>
<keyword id="KW-0965">Cell junction</keyword>
<keyword id="KW-1003">Cell membrane</keyword>
<keyword id="KW-0966">Cell projection</keyword>
<keyword id="KW-1015">Disulfide bond</keyword>
<keyword id="KW-0245">EGF-like domain</keyword>
<keyword id="KW-0967">Endosome</keyword>
<keyword id="KW-0325">Glycoprotein</keyword>
<keyword id="KW-0401">Integrin</keyword>
<keyword id="KW-1017">Isopeptide bond</keyword>
<keyword id="KW-0460">Magnesium</keyword>
<keyword id="KW-0472">Membrane</keyword>
<keyword id="KW-0479">Metal-binding</keyword>
<keyword id="KW-0517">Myogenesis</keyword>
<keyword id="KW-0597">Phosphoprotein</keyword>
<keyword id="KW-0675">Receptor</keyword>
<keyword id="KW-1185">Reference proteome</keyword>
<keyword id="KW-0677">Repeat</keyword>
<keyword id="KW-0732">Signal</keyword>
<keyword id="KW-0812">Transmembrane</keyword>
<keyword id="KW-1133">Transmembrane helix</keyword>
<keyword id="KW-0832">Ubl conjugation</keyword>
<sequence length="799" mass="88495">MNLQLVFWIGLISLICSVFGQTDKNRCLKANAKSCGECIQAGPNCGWCTNTTFLQEGMPTSARCDDLEALKKKGCHPSDIENPRGSQTIKKNKNVTNRSKGMAEKLRPEDITQIQPQQLLLKLRSGEPQKFTLKFKRAEDYPIDLYYLMDLSYSMKDDLENVKSLGTDLMNEMRRITSDFRIGFGSFVEKTVMPYISTTPAKLRNPCTSEQNCTSPFSYKNVLSLTDRGEFFNELVGQQRISGNLDSPEGGFDAIMQVAVCGSLIGWRNVTRLLVFSTDAGFHFAGDGKLGGIVLPNDGQCHLENNVYTMSHYYDYPSIAHLVQKLSENNIQTIFAVTEEFQPVYKELKNLIPKSAVGTLSGNSSNVIQLIIDAYNSLSSEVILENSKLPDGVTINYKSYCKNGVNGTGENGRKCSNISIGDEVQFEISITANKCPNKESENQLKLNPLGFTEEVEVVLQFICKCNCQSHGIPASPKCHEGNGTFECGACRCNEGRVGRHCECSTDEVNSEDMDAYCRKENSSEICSNNGECVCGQCVCRKRENTNEIYSGKFCECDNFNCDRSNGLICGGNGVCRCRVCECYPNYTGSACDCSLDTVPCVATNGQICNGRGICECGACKCTDPKFQGPTCETCQTCLGVCAEHKECVQCRAFNKGEKKDTCAQECSHFNLTKVESREKLPQPVQVDPVTHCKEKDIDDCWFYFTYSVNSKGEAHVHVVETPDCPTGPDIIPIVAGVVAGIVLIGLALLLIWKLLMIIHDRREFAKFEKEKMNAKWDTGENPIYKSAVTTVVNPKYEGK</sequence>